<protein>
    <recommendedName>
        <fullName evidence="1">Large ribosomal subunit protein bL32c</fullName>
    </recommendedName>
    <alternativeName>
        <fullName>50S ribosomal protein L32, chloroplastic</fullName>
    </alternativeName>
</protein>
<organism>
    <name type="scientific">Brassica campestris</name>
    <name type="common">Field mustard</name>
    <dbReference type="NCBI Taxonomy" id="3711"/>
    <lineage>
        <taxon>Eukaryota</taxon>
        <taxon>Viridiplantae</taxon>
        <taxon>Streptophyta</taxon>
        <taxon>Embryophyta</taxon>
        <taxon>Tracheophyta</taxon>
        <taxon>Spermatophyta</taxon>
        <taxon>Magnoliopsida</taxon>
        <taxon>eudicotyledons</taxon>
        <taxon>Gunneridae</taxon>
        <taxon>Pentapetalae</taxon>
        <taxon>rosids</taxon>
        <taxon>malvids</taxon>
        <taxon>Brassicales</taxon>
        <taxon>Brassicaceae</taxon>
        <taxon>Brassiceae</taxon>
        <taxon>Brassica</taxon>
    </lineage>
</organism>
<evidence type="ECO:0000305" key="1"/>
<comment type="subcellular location">
    <subcellularLocation>
        <location>Plastid</location>
        <location>Chloroplast</location>
    </subcellularLocation>
</comment>
<comment type="similarity">
    <text evidence="1">Belongs to the bacterial ribosomal protein bL32 family.</text>
</comment>
<feature type="chain" id="PRO_0000172451" description="Large ribosomal subunit protein bL32c">
    <location>
        <begin position="1"/>
        <end position="52"/>
    </location>
</feature>
<name>RK32_BRACM</name>
<geneLocation type="chloroplast"/>
<dbReference type="EMBL" id="Z26332">
    <property type="protein sequence ID" value="CAA81233.1"/>
    <property type="molecule type" value="mRNA"/>
</dbReference>
<dbReference type="PIR" id="S37208">
    <property type="entry name" value="S37208"/>
</dbReference>
<dbReference type="RefSeq" id="YP_009553816.1">
    <property type="nucleotide sequence ID" value="NC_040849.1"/>
</dbReference>
<dbReference type="SMR" id="P61848"/>
<dbReference type="GeneID" id="41704150"/>
<dbReference type="Proteomes" id="UP000011750">
    <property type="component" value="Unplaced"/>
</dbReference>
<dbReference type="GO" id="GO:0009507">
    <property type="term" value="C:chloroplast"/>
    <property type="evidence" value="ECO:0007669"/>
    <property type="project" value="UniProtKB-SubCell"/>
</dbReference>
<dbReference type="GO" id="GO:0015934">
    <property type="term" value="C:large ribosomal subunit"/>
    <property type="evidence" value="ECO:0007669"/>
    <property type="project" value="InterPro"/>
</dbReference>
<dbReference type="GO" id="GO:0003735">
    <property type="term" value="F:structural constituent of ribosome"/>
    <property type="evidence" value="ECO:0007669"/>
    <property type="project" value="InterPro"/>
</dbReference>
<dbReference type="GO" id="GO:0006412">
    <property type="term" value="P:translation"/>
    <property type="evidence" value="ECO:0007669"/>
    <property type="project" value="UniProtKB-UniRule"/>
</dbReference>
<dbReference type="HAMAP" id="MF_00340">
    <property type="entry name" value="Ribosomal_bL32"/>
    <property type="match status" value="1"/>
</dbReference>
<dbReference type="InterPro" id="IPR002677">
    <property type="entry name" value="Ribosomal_bL32"/>
</dbReference>
<dbReference type="InterPro" id="IPR044958">
    <property type="entry name" value="Ribosomal_bL32_plant/cyanobact"/>
</dbReference>
<dbReference type="InterPro" id="IPR011332">
    <property type="entry name" value="Ribosomal_zn-bd"/>
</dbReference>
<dbReference type="PANTHER" id="PTHR36083">
    <property type="entry name" value="50S RIBOSOMAL PROTEIN L32, CHLOROPLASTIC"/>
    <property type="match status" value="1"/>
</dbReference>
<dbReference type="PANTHER" id="PTHR36083:SF1">
    <property type="entry name" value="LARGE RIBOSOMAL SUBUNIT PROTEIN BL32C"/>
    <property type="match status" value="1"/>
</dbReference>
<dbReference type="Pfam" id="PF01783">
    <property type="entry name" value="Ribosomal_L32p"/>
    <property type="match status" value="1"/>
</dbReference>
<dbReference type="SUPFAM" id="SSF57829">
    <property type="entry name" value="Zn-binding ribosomal proteins"/>
    <property type="match status" value="1"/>
</dbReference>
<sequence length="52" mass="6061">MAVPKKRTSISKKRIRKKIWKRKGYWTSLKAFSLGKSLSTGNSKSFFVQQNK</sequence>
<accession>P61848</accession>
<accession>P42354</accession>
<reference key="1">
    <citation type="submission" date="1993-09" db="EMBL/GenBank/DDBJ databases">
        <title>Nucleotide sequence of Brassica rapa chloroplast ribosomal protein L32.</title>
        <authorList>
            <person name="Song S."/>
            <person name="Shin C."/>
            <person name="Choi Y."/>
        </authorList>
    </citation>
    <scope>NUCLEOTIDE SEQUENCE [MRNA]</scope>
</reference>
<keyword id="KW-0150">Chloroplast</keyword>
<keyword id="KW-0934">Plastid</keyword>
<keyword id="KW-1185">Reference proteome</keyword>
<keyword id="KW-0687">Ribonucleoprotein</keyword>
<keyword id="KW-0689">Ribosomal protein</keyword>
<gene>
    <name type="primary">rpl32</name>
</gene>
<proteinExistence type="inferred from homology"/>